<organism>
    <name type="scientific">Saccharomyces cerevisiae (strain ATCC 204508 / S288c)</name>
    <name type="common">Baker's yeast</name>
    <dbReference type="NCBI Taxonomy" id="559292"/>
    <lineage>
        <taxon>Eukaryota</taxon>
        <taxon>Fungi</taxon>
        <taxon>Dikarya</taxon>
        <taxon>Ascomycota</taxon>
        <taxon>Saccharomycotina</taxon>
        <taxon>Saccharomycetes</taxon>
        <taxon>Saccharomycetales</taxon>
        <taxon>Saccharomycetaceae</taxon>
        <taxon>Saccharomyces</taxon>
    </lineage>
</organism>
<sequence>MANTGCLSPGAFLSKVPEFFQTANEKHITVRLTAKRLIEHDPVEGNLEFDSTNHPDYDVSKKASEISVSSRSDREYPLLIRMSYGSHDKKTKCSTVVKASELDQFWQEYSSVFKGGMQNLIKKKKKKSKNGTISKTGKKNKVAKKN</sequence>
<feature type="chain" id="PRO_0000135196" description="Signal recognition particle subunit SRP14">
    <location>
        <begin position="1"/>
        <end position="146"/>
    </location>
</feature>
<feature type="region of interest" description="Disordered" evidence="2">
    <location>
        <begin position="121"/>
        <end position="146"/>
    </location>
</feature>
<feature type="compositionally biased region" description="Basic residues" evidence="2">
    <location>
        <begin position="136"/>
        <end position="146"/>
    </location>
</feature>
<feature type="modified residue" description="Phosphoserine" evidence="8">
    <location>
        <position position="8"/>
    </location>
</feature>
<evidence type="ECO:0000250" key="1"/>
<evidence type="ECO:0000256" key="2">
    <source>
        <dbReference type="SAM" id="MobiDB-lite"/>
    </source>
</evidence>
<evidence type="ECO:0000269" key="3">
    <source>
    </source>
</evidence>
<evidence type="ECO:0000269" key="4">
    <source>
    </source>
</evidence>
<evidence type="ECO:0000269" key="5">
    <source>
    </source>
</evidence>
<evidence type="ECO:0000269" key="6">
    <source>
    </source>
</evidence>
<evidence type="ECO:0000305" key="7"/>
<evidence type="ECO:0007744" key="8">
    <source>
    </source>
</evidence>
<gene>
    <name type="primary">SRP14</name>
    <name type="ordered locus">YDL092W</name>
    <name type="ORF">D2404</name>
</gene>
<comment type="function">
    <text evidence="3 6">Component of the signal recognition particle (SRP) complex, a ribonucleoprotein complex that mediates the cotranslational targeting of secretory and membrane proteins to the endoplasmic reticulum (ER) (PubMed:10573124, PubMed:7925282). The SRP complex is required for the cotranslational protein translocation for ER import and preferentially recognizes strongly hydrophobic signal sequences (PubMed:10573124). It is involved in targeting the nascent chain-ribosome (RNC) complex to the ER and is proposed to participate in the arrest of nascent chain elongation during membrane targeting (PubMed:10573124). SRP14 binds scR1 RNA to form the probable Alu domain of SRP responsible for elongation arrest (PubMed:10573124).</text>
</comment>
<comment type="subunit">
    <text evidence="6">Component of a fungal signal recognition particle (SRP) complex that consists of a 7SL RNA molecule (scR1) and at least six protein subunits: SRP72, SRP68, SRP54, SEC65, SRP21 and SRP14 (PubMed:7925282). At least SRP14, SRP21, SRP68 and SRP72 are proposed to get assembled together with scR1 RNA as a pre-SRP complex in the nucleolus which is exported to the cytoplasm. SRP14 binds RNA as a homodimer (PubMed:7925282).</text>
</comment>
<comment type="interaction">
    <interactant intactId="EBI-17977">
        <id>P38985</id>
    </interactant>
    <interactant intactId="EBI-16641">
        <id>P29478</id>
        <label>SEC65</label>
    </interactant>
    <organismsDiffer>false</organismsDiffer>
    <experiments>8</experiments>
</comment>
<comment type="interaction">
    <interactant intactId="EBI-17977">
        <id>P38985</id>
    </interactant>
    <interactant intactId="EBI-18011">
        <id>P38688</id>
        <label>SRP72</label>
    </interactant>
    <organismsDiffer>false</organismsDiffer>
    <experiments>7</experiments>
</comment>
<comment type="subcellular location">
    <subcellularLocation>
        <location evidence="1">Cytoplasm</location>
    </subcellularLocation>
    <subcellularLocation>
        <location evidence="4">Nucleus</location>
    </subcellularLocation>
</comment>
<comment type="miscellaneous">
    <text evidence="5">Present with 8000 molecules/cell in log phase SD medium.</text>
</comment>
<comment type="similarity">
    <text evidence="7">Belongs to the SRP14 family.</text>
</comment>
<name>SRP14_YEAST</name>
<keyword id="KW-0963">Cytoplasm</keyword>
<keyword id="KW-0539">Nucleus</keyword>
<keyword id="KW-0597">Phosphoprotein</keyword>
<keyword id="KW-1185">Reference proteome</keyword>
<keyword id="KW-0687">Ribonucleoprotein</keyword>
<keyword id="KW-0694">RNA-binding</keyword>
<keyword id="KW-0733">Signal recognition particle</keyword>
<accession>P38985</accession>
<accession>D6VRQ6</accession>
<proteinExistence type="evidence at protein level"/>
<protein>
    <recommendedName>
        <fullName>Signal recognition particle subunit SRP14</fullName>
    </recommendedName>
    <alternativeName>
        <fullName>Signal recognition particle 14 kDa protein homolog</fullName>
    </alternativeName>
</protein>
<dbReference type="EMBL" id="L35155">
    <property type="protein sequence ID" value="AAA53402.1"/>
    <property type="molecule type" value="Genomic_DNA"/>
</dbReference>
<dbReference type="EMBL" id="X95644">
    <property type="protein sequence ID" value="CAA64919.1"/>
    <property type="molecule type" value="Genomic_DNA"/>
</dbReference>
<dbReference type="EMBL" id="Z74140">
    <property type="protein sequence ID" value="CAA98659.1"/>
    <property type="molecule type" value="Genomic_DNA"/>
</dbReference>
<dbReference type="EMBL" id="Z74139">
    <property type="protein sequence ID" value="CAA98658.1"/>
    <property type="molecule type" value="Genomic_DNA"/>
</dbReference>
<dbReference type="EMBL" id="AY558159">
    <property type="protein sequence ID" value="AAS56485.1"/>
    <property type="molecule type" value="Genomic_DNA"/>
</dbReference>
<dbReference type="EMBL" id="BK006938">
    <property type="protein sequence ID" value="DAA11766.1"/>
    <property type="molecule type" value="Genomic_DNA"/>
</dbReference>
<dbReference type="PIR" id="S51616">
    <property type="entry name" value="S51616"/>
</dbReference>
<dbReference type="RefSeq" id="NP_010191.1">
    <property type="nucleotide sequence ID" value="NM_001180151.1"/>
</dbReference>
<dbReference type="SMR" id="P38985"/>
<dbReference type="BioGRID" id="31968">
    <property type="interactions" value="46"/>
</dbReference>
<dbReference type="ComplexPortal" id="CPX-609">
    <property type="entry name" value="Signal recognition particle"/>
</dbReference>
<dbReference type="DIP" id="DIP-4864N"/>
<dbReference type="FunCoup" id="P38985">
    <property type="interactions" value="82"/>
</dbReference>
<dbReference type="IntAct" id="P38985">
    <property type="interactions" value="17"/>
</dbReference>
<dbReference type="MINT" id="P38985"/>
<dbReference type="STRING" id="4932.YDL092W"/>
<dbReference type="iPTMnet" id="P38985"/>
<dbReference type="PaxDb" id="4932-YDL092W"/>
<dbReference type="PeptideAtlas" id="P38985"/>
<dbReference type="EnsemblFungi" id="YDL092W_mRNA">
    <property type="protein sequence ID" value="YDL092W"/>
    <property type="gene ID" value="YDL092W"/>
</dbReference>
<dbReference type="GeneID" id="851466"/>
<dbReference type="KEGG" id="sce:YDL092W"/>
<dbReference type="AGR" id="SGD:S000002250"/>
<dbReference type="SGD" id="S000002250">
    <property type="gene designation" value="SRP14"/>
</dbReference>
<dbReference type="VEuPathDB" id="FungiDB:YDL092W"/>
<dbReference type="eggNOG" id="KOG1761">
    <property type="taxonomic scope" value="Eukaryota"/>
</dbReference>
<dbReference type="HOGENOM" id="CLU_094309_3_0_1"/>
<dbReference type="InParanoid" id="P38985"/>
<dbReference type="OMA" id="DKFWQDY"/>
<dbReference type="OrthoDB" id="19209at2759"/>
<dbReference type="BioCyc" id="YEAST:G3O-29499-MONOMER"/>
<dbReference type="Reactome" id="R-SCE-1799339">
    <property type="pathway name" value="SRP-dependent cotranslational protein targeting to membrane"/>
</dbReference>
<dbReference type="Reactome" id="R-SCE-6798695">
    <property type="pathway name" value="Neutrophil degranulation"/>
</dbReference>
<dbReference type="BioGRID-ORCS" id="851466">
    <property type="hits" value="4 hits in 10 CRISPR screens"/>
</dbReference>
<dbReference type="PRO" id="PR:P38985"/>
<dbReference type="Proteomes" id="UP000002311">
    <property type="component" value="Chromosome IV"/>
</dbReference>
<dbReference type="RNAct" id="P38985">
    <property type="molecule type" value="protein"/>
</dbReference>
<dbReference type="GO" id="GO:0005634">
    <property type="term" value="C:nucleus"/>
    <property type="evidence" value="ECO:0007669"/>
    <property type="project" value="UniProtKB-SubCell"/>
</dbReference>
<dbReference type="GO" id="GO:0005786">
    <property type="term" value="C:signal recognition particle, endoplasmic reticulum targeting"/>
    <property type="evidence" value="ECO:0000314"/>
    <property type="project" value="SGD"/>
</dbReference>
<dbReference type="GO" id="GO:0008312">
    <property type="term" value="F:7S RNA binding"/>
    <property type="evidence" value="ECO:0000314"/>
    <property type="project" value="SGD"/>
</dbReference>
<dbReference type="GO" id="GO:0030942">
    <property type="term" value="F:endoplasmic reticulum signal peptide binding"/>
    <property type="evidence" value="ECO:0007669"/>
    <property type="project" value="InterPro"/>
</dbReference>
<dbReference type="GO" id="GO:0045047">
    <property type="term" value="P:protein targeting to ER"/>
    <property type="evidence" value="ECO:0000318"/>
    <property type="project" value="GO_Central"/>
</dbReference>
<dbReference type="GO" id="GO:0006617">
    <property type="term" value="P:SRP-dependent cotranslational protein targeting to membrane, signal sequence recognition"/>
    <property type="evidence" value="ECO:0000303"/>
    <property type="project" value="ComplexPortal"/>
</dbReference>
<dbReference type="GO" id="GO:0006616">
    <property type="term" value="P:SRP-dependent cotranslational protein targeting to membrane, translocation"/>
    <property type="evidence" value="ECO:0000314"/>
    <property type="project" value="SGD"/>
</dbReference>
<dbReference type="FunFam" id="3.30.720.10:FF:000010">
    <property type="entry name" value="Signal recognition particle (SRP) subunit"/>
    <property type="match status" value="1"/>
</dbReference>
<dbReference type="Gene3D" id="3.30.720.10">
    <property type="entry name" value="Signal recognition particle alu RNA binding heterodimer, srp9/1"/>
    <property type="match status" value="1"/>
</dbReference>
<dbReference type="InterPro" id="IPR003210">
    <property type="entry name" value="Signal_recog_particle_SRP14"/>
</dbReference>
<dbReference type="InterPro" id="IPR009018">
    <property type="entry name" value="Signal_recog_particle_SRP9/14"/>
</dbReference>
<dbReference type="PANTHER" id="PTHR12013">
    <property type="entry name" value="SIGNAL RECOGNITION PARTICLE 14 KD PROTEIN"/>
    <property type="match status" value="1"/>
</dbReference>
<dbReference type="Pfam" id="PF02290">
    <property type="entry name" value="SRP14"/>
    <property type="match status" value="1"/>
</dbReference>
<dbReference type="SUPFAM" id="SSF54762">
    <property type="entry name" value="Signal recognition particle alu RNA binding heterodimer, SRP9/14"/>
    <property type="match status" value="1"/>
</dbReference>
<reference key="1">
    <citation type="journal article" date="1994" name="EMBO J.">
        <title>Subunits of the Saccharomyces cerevisiae signal recognition particle required for its functional expression.</title>
        <authorList>
            <person name="Brown J.D."/>
            <person name="Hann B.C."/>
            <person name="Medzihradszky K.F."/>
            <person name="Niwa M."/>
            <person name="Burlingame A.L."/>
            <person name="Walter P."/>
        </authorList>
    </citation>
    <scope>NUCLEOTIDE SEQUENCE [GENOMIC DNA]</scope>
    <scope>FUNCTION</scope>
    <scope>IDENTIFICATION IN THE SRP COMPLEX</scope>
    <source>
        <strain>ATCC 204508 / S288c</strain>
    </source>
</reference>
<reference key="2">
    <citation type="journal article" date="1996" name="Yeast">
        <title>The sequence of a 16,691 bp segment of Saccharomyces cerevisiae chromosome IV identifies the DUN1, PMT1, PMT5, SRP14 and DPR1 genes, and five new open reading frames.</title>
        <authorList>
            <person name="Boskovic J."/>
            <person name="Soler-Mira A."/>
            <person name="Garcia-Cantalejo J.M."/>
            <person name="Ballesta J.P.G."/>
            <person name="Jimenez A."/>
            <person name="Remacha M.A."/>
        </authorList>
    </citation>
    <scope>NUCLEOTIDE SEQUENCE [GENOMIC DNA]</scope>
    <source>
        <strain>ATCC 96604 / S288c / FY1679</strain>
    </source>
</reference>
<reference key="3">
    <citation type="journal article" date="1997" name="Nature">
        <title>The nucleotide sequence of Saccharomyces cerevisiae chromosome IV.</title>
        <authorList>
            <person name="Jacq C."/>
            <person name="Alt-Moerbe J."/>
            <person name="Andre B."/>
            <person name="Arnold W."/>
            <person name="Bahr A."/>
            <person name="Ballesta J.P.G."/>
            <person name="Bargues M."/>
            <person name="Baron L."/>
            <person name="Becker A."/>
            <person name="Biteau N."/>
            <person name="Bloecker H."/>
            <person name="Blugeon C."/>
            <person name="Boskovic J."/>
            <person name="Brandt P."/>
            <person name="Brueckner M."/>
            <person name="Buitrago M.J."/>
            <person name="Coster F."/>
            <person name="Delaveau T."/>
            <person name="del Rey F."/>
            <person name="Dujon B."/>
            <person name="Eide L.G."/>
            <person name="Garcia-Cantalejo J.M."/>
            <person name="Goffeau A."/>
            <person name="Gomez-Peris A."/>
            <person name="Granotier C."/>
            <person name="Hanemann V."/>
            <person name="Hankeln T."/>
            <person name="Hoheisel J.D."/>
            <person name="Jaeger W."/>
            <person name="Jimenez A."/>
            <person name="Jonniaux J.-L."/>
            <person name="Kraemer C."/>
            <person name="Kuester H."/>
            <person name="Laamanen P."/>
            <person name="Legros Y."/>
            <person name="Louis E.J."/>
            <person name="Moeller-Rieker S."/>
            <person name="Monnet A."/>
            <person name="Moro M."/>
            <person name="Mueller-Auer S."/>
            <person name="Nussbaumer B."/>
            <person name="Paricio N."/>
            <person name="Paulin L."/>
            <person name="Perea J."/>
            <person name="Perez-Alonso M."/>
            <person name="Perez-Ortin J.E."/>
            <person name="Pohl T.M."/>
            <person name="Prydz H."/>
            <person name="Purnelle B."/>
            <person name="Rasmussen S.W."/>
            <person name="Remacha M.A."/>
            <person name="Revuelta J.L."/>
            <person name="Rieger M."/>
            <person name="Salom D."/>
            <person name="Saluz H.P."/>
            <person name="Saiz J.E."/>
            <person name="Saren A.-M."/>
            <person name="Schaefer M."/>
            <person name="Scharfe M."/>
            <person name="Schmidt E.R."/>
            <person name="Schneider C."/>
            <person name="Scholler P."/>
            <person name="Schwarz S."/>
            <person name="Soler-Mira A."/>
            <person name="Urrestarazu L.A."/>
            <person name="Verhasselt P."/>
            <person name="Vissers S."/>
            <person name="Voet M."/>
            <person name="Volckaert G."/>
            <person name="Wagner G."/>
            <person name="Wambutt R."/>
            <person name="Wedler E."/>
            <person name="Wedler H."/>
            <person name="Woelfl S."/>
            <person name="Harris D.E."/>
            <person name="Bowman S."/>
            <person name="Brown D."/>
            <person name="Churcher C.M."/>
            <person name="Connor R."/>
            <person name="Dedman K."/>
            <person name="Gentles S."/>
            <person name="Hamlin N."/>
            <person name="Hunt S."/>
            <person name="Jones L."/>
            <person name="McDonald S."/>
            <person name="Murphy L.D."/>
            <person name="Niblett D."/>
            <person name="Odell C."/>
            <person name="Oliver K."/>
            <person name="Rajandream M.A."/>
            <person name="Richards C."/>
            <person name="Shore L."/>
            <person name="Walsh S.V."/>
            <person name="Barrell B.G."/>
            <person name="Dietrich F.S."/>
            <person name="Mulligan J.T."/>
            <person name="Allen E."/>
            <person name="Araujo R."/>
            <person name="Aviles E."/>
            <person name="Berno A."/>
            <person name="Carpenter J."/>
            <person name="Chen E."/>
            <person name="Cherry J.M."/>
            <person name="Chung E."/>
            <person name="Duncan M."/>
            <person name="Hunicke-Smith S."/>
            <person name="Hyman R.W."/>
            <person name="Komp C."/>
            <person name="Lashkari D."/>
            <person name="Lew H."/>
            <person name="Lin D."/>
            <person name="Mosedale D."/>
            <person name="Nakahara K."/>
            <person name="Namath A."/>
            <person name="Oefner P."/>
            <person name="Oh C."/>
            <person name="Petel F.X."/>
            <person name="Roberts D."/>
            <person name="Schramm S."/>
            <person name="Schroeder M."/>
            <person name="Shogren T."/>
            <person name="Shroff N."/>
            <person name="Winant A."/>
            <person name="Yelton M.A."/>
            <person name="Botstein D."/>
            <person name="Davis R.W."/>
            <person name="Johnston M."/>
            <person name="Andrews S."/>
            <person name="Brinkman R."/>
            <person name="Cooper J."/>
            <person name="Ding H."/>
            <person name="Du Z."/>
            <person name="Favello A."/>
            <person name="Fulton L."/>
            <person name="Gattung S."/>
            <person name="Greco T."/>
            <person name="Hallsworth K."/>
            <person name="Hawkins J."/>
            <person name="Hillier L.W."/>
            <person name="Jier M."/>
            <person name="Johnson D."/>
            <person name="Johnston L."/>
            <person name="Kirsten J."/>
            <person name="Kucaba T."/>
            <person name="Langston Y."/>
            <person name="Latreille P."/>
            <person name="Le T."/>
            <person name="Mardis E."/>
            <person name="Menezes S."/>
            <person name="Miller N."/>
            <person name="Nhan M."/>
            <person name="Pauley A."/>
            <person name="Peluso D."/>
            <person name="Rifkin L."/>
            <person name="Riles L."/>
            <person name="Taich A."/>
            <person name="Trevaskis E."/>
            <person name="Vignati D."/>
            <person name="Wilcox L."/>
            <person name="Wohldman P."/>
            <person name="Vaudin M."/>
            <person name="Wilson R."/>
            <person name="Waterston R."/>
            <person name="Albermann K."/>
            <person name="Hani J."/>
            <person name="Heumann K."/>
            <person name="Kleine K."/>
            <person name="Mewes H.-W."/>
            <person name="Zollner A."/>
            <person name="Zaccaria P."/>
        </authorList>
    </citation>
    <scope>NUCLEOTIDE SEQUENCE [LARGE SCALE GENOMIC DNA]</scope>
    <source>
        <strain>ATCC 204508 / S288c</strain>
    </source>
</reference>
<reference key="4">
    <citation type="journal article" date="2014" name="G3 (Bethesda)">
        <title>The reference genome sequence of Saccharomyces cerevisiae: Then and now.</title>
        <authorList>
            <person name="Engel S.R."/>
            <person name="Dietrich F.S."/>
            <person name="Fisk D.G."/>
            <person name="Binkley G."/>
            <person name="Balakrishnan R."/>
            <person name="Costanzo M.C."/>
            <person name="Dwight S.S."/>
            <person name="Hitz B.C."/>
            <person name="Karra K."/>
            <person name="Nash R.S."/>
            <person name="Weng S."/>
            <person name="Wong E.D."/>
            <person name="Lloyd P."/>
            <person name="Skrzypek M.S."/>
            <person name="Miyasato S.R."/>
            <person name="Simison M."/>
            <person name="Cherry J.M."/>
        </authorList>
    </citation>
    <scope>GENOME REANNOTATION</scope>
    <source>
        <strain>ATCC 204508 / S288c</strain>
    </source>
</reference>
<reference key="5">
    <citation type="journal article" date="2007" name="Genome Res.">
        <title>Approaching a complete repository of sequence-verified protein-encoding clones for Saccharomyces cerevisiae.</title>
        <authorList>
            <person name="Hu Y."/>
            <person name="Rolfs A."/>
            <person name="Bhullar B."/>
            <person name="Murthy T.V.S."/>
            <person name="Zhu C."/>
            <person name="Berger M.F."/>
            <person name="Camargo A.A."/>
            <person name="Kelley F."/>
            <person name="McCarron S."/>
            <person name="Jepson D."/>
            <person name="Richardson A."/>
            <person name="Raphael J."/>
            <person name="Moreira D."/>
            <person name="Taycher E."/>
            <person name="Zuo D."/>
            <person name="Mohr S."/>
            <person name="Kane M.F."/>
            <person name="Williamson J."/>
            <person name="Simpson A.J.G."/>
            <person name="Bulyk M.L."/>
            <person name="Harlow E."/>
            <person name="Marsischky G."/>
            <person name="Kolodner R.D."/>
            <person name="LaBaer J."/>
        </authorList>
    </citation>
    <scope>NUCLEOTIDE SEQUENCE [GENOMIC DNA]</scope>
    <source>
        <strain>ATCC 204508 / S288c</strain>
    </source>
</reference>
<reference key="6">
    <citation type="journal article" date="1999" name="RNA">
        <title>The Alu domain homolog of the yeast signal recognition particle consists of an Srp14p homodimer and a yeast-specific RNA structure.</title>
        <authorList>
            <person name="Strub K."/>
            <person name="Fornallaz M."/>
            <person name="Bui N."/>
        </authorList>
    </citation>
    <scope>FUNCTION</scope>
    <scope>RNA-BINDING</scope>
</reference>
<reference key="7">
    <citation type="journal article" date="2001" name="J. Cell Biol.">
        <title>Biogenesis of the signal recognition particle (SRP) involves import of SRP proteins into the nucleolus, assembly with the SRP-RNA, and Xpo1p-mediated export.</title>
        <authorList>
            <person name="Grosshans H."/>
            <person name="Deinert K."/>
            <person name="Hurt E.C."/>
            <person name="Simos G."/>
        </authorList>
    </citation>
    <scope>ASSEMBLY OF THE SRP COMPLEX</scope>
    <scope>SUBCELLULAR LOCATION</scope>
</reference>
<reference key="8">
    <citation type="journal article" date="2003" name="Nature">
        <title>Global analysis of protein expression in yeast.</title>
        <authorList>
            <person name="Ghaemmaghami S."/>
            <person name="Huh W.-K."/>
            <person name="Bower K."/>
            <person name="Howson R.W."/>
            <person name="Belle A."/>
            <person name="Dephoure N."/>
            <person name="O'Shea E.K."/>
            <person name="Weissman J.S."/>
        </authorList>
    </citation>
    <scope>LEVEL OF PROTEIN EXPRESSION [LARGE SCALE ANALYSIS]</scope>
</reference>
<reference key="9">
    <citation type="journal article" date="2008" name="Mol. Cell. Proteomics">
        <title>A multidimensional chromatography technology for in-depth phosphoproteome analysis.</title>
        <authorList>
            <person name="Albuquerque C.P."/>
            <person name="Smolka M.B."/>
            <person name="Payne S.H."/>
            <person name="Bafna V."/>
            <person name="Eng J."/>
            <person name="Zhou H."/>
        </authorList>
    </citation>
    <scope>PHOSPHORYLATION [LARGE SCALE ANALYSIS] AT SER-8</scope>
    <scope>IDENTIFICATION BY MASS SPECTROMETRY [LARGE SCALE ANALYSIS]</scope>
</reference>